<dbReference type="EC" id="4.1.1.39" evidence="1"/>
<dbReference type="EMBL" id="CP000552">
    <property type="protein sequence ID" value="ABM71823.1"/>
    <property type="molecule type" value="Genomic_DNA"/>
</dbReference>
<dbReference type="RefSeq" id="WP_002805854.1">
    <property type="nucleotide sequence ID" value="NC_008817.1"/>
</dbReference>
<dbReference type="SMR" id="A2BVL2"/>
<dbReference type="STRING" id="167542.P9515_06141"/>
<dbReference type="GeneID" id="60201106"/>
<dbReference type="KEGG" id="pmc:P9515_06141"/>
<dbReference type="eggNOG" id="COG1850">
    <property type="taxonomic scope" value="Bacteria"/>
</dbReference>
<dbReference type="HOGENOM" id="CLU_031450_2_0_3"/>
<dbReference type="OrthoDB" id="9770811at2"/>
<dbReference type="Proteomes" id="UP000001589">
    <property type="component" value="Chromosome"/>
</dbReference>
<dbReference type="GO" id="GO:0031470">
    <property type="term" value="C:carboxysome"/>
    <property type="evidence" value="ECO:0007669"/>
    <property type="project" value="UniProtKB-SubCell"/>
</dbReference>
<dbReference type="GO" id="GO:0000287">
    <property type="term" value="F:magnesium ion binding"/>
    <property type="evidence" value="ECO:0007669"/>
    <property type="project" value="UniProtKB-UniRule"/>
</dbReference>
<dbReference type="GO" id="GO:0004497">
    <property type="term" value="F:monooxygenase activity"/>
    <property type="evidence" value="ECO:0007669"/>
    <property type="project" value="UniProtKB-KW"/>
</dbReference>
<dbReference type="GO" id="GO:0016984">
    <property type="term" value="F:ribulose-bisphosphate carboxylase activity"/>
    <property type="evidence" value="ECO:0007669"/>
    <property type="project" value="UniProtKB-UniRule"/>
</dbReference>
<dbReference type="GO" id="GO:0009853">
    <property type="term" value="P:photorespiration"/>
    <property type="evidence" value="ECO:0007669"/>
    <property type="project" value="UniProtKB-KW"/>
</dbReference>
<dbReference type="GO" id="GO:0019253">
    <property type="term" value="P:reductive pentose-phosphate cycle"/>
    <property type="evidence" value="ECO:0007669"/>
    <property type="project" value="UniProtKB-UniRule"/>
</dbReference>
<dbReference type="Gene3D" id="3.20.20.110">
    <property type="entry name" value="Ribulose bisphosphate carboxylase, large subunit, C-terminal domain"/>
    <property type="match status" value="1"/>
</dbReference>
<dbReference type="Gene3D" id="3.30.70.150">
    <property type="entry name" value="RuBisCO large subunit, N-terminal domain"/>
    <property type="match status" value="1"/>
</dbReference>
<dbReference type="HAMAP" id="MF_01338">
    <property type="entry name" value="RuBisCO_L_type1"/>
    <property type="match status" value="1"/>
</dbReference>
<dbReference type="InterPro" id="IPR033966">
    <property type="entry name" value="RuBisCO"/>
</dbReference>
<dbReference type="InterPro" id="IPR000685">
    <property type="entry name" value="RuBisCO_lsu_C"/>
</dbReference>
<dbReference type="InterPro" id="IPR036376">
    <property type="entry name" value="RuBisCO_lsu_C_sf"/>
</dbReference>
<dbReference type="InterPro" id="IPR017443">
    <property type="entry name" value="RuBisCO_lsu_fd_N"/>
</dbReference>
<dbReference type="InterPro" id="IPR036422">
    <property type="entry name" value="RuBisCO_lsu_N_sf"/>
</dbReference>
<dbReference type="InterPro" id="IPR020888">
    <property type="entry name" value="RuBisCO_lsuI"/>
</dbReference>
<dbReference type="NCBIfam" id="NF003252">
    <property type="entry name" value="PRK04208.1"/>
    <property type="match status" value="1"/>
</dbReference>
<dbReference type="PANTHER" id="PTHR42704">
    <property type="entry name" value="RIBULOSE BISPHOSPHATE CARBOXYLASE"/>
    <property type="match status" value="1"/>
</dbReference>
<dbReference type="PANTHER" id="PTHR42704:SF17">
    <property type="entry name" value="RIBULOSE BISPHOSPHATE CARBOXYLASE LARGE CHAIN"/>
    <property type="match status" value="1"/>
</dbReference>
<dbReference type="Pfam" id="PF00016">
    <property type="entry name" value="RuBisCO_large"/>
    <property type="match status" value="1"/>
</dbReference>
<dbReference type="Pfam" id="PF02788">
    <property type="entry name" value="RuBisCO_large_N"/>
    <property type="match status" value="1"/>
</dbReference>
<dbReference type="SFLD" id="SFLDG01052">
    <property type="entry name" value="RuBisCO"/>
    <property type="match status" value="1"/>
</dbReference>
<dbReference type="SFLD" id="SFLDS00014">
    <property type="entry name" value="RuBisCO"/>
    <property type="match status" value="1"/>
</dbReference>
<dbReference type="SFLD" id="SFLDG00301">
    <property type="entry name" value="RuBisCO-like_proteins"/>
    <property type="match status" value="1"/>
</dbReference>
<dbReference type="SUPFAM" id="SSF51649">
    <property type="entry name" value="RuBisCo, C-terminal domain"/>
    <property type="match status" value="1"/>
</dbReference>
<dbReference type="SUPFAM" id="SSF54966">
    <property type="entry name" value="RuBisCO, large subunit, small (N-terminal) domain"/>
    <property type="match status" value="1"/>
</dbReference>
<organism>
    <name type="scientific">Prochlorococcus marinus (strain MIT 9515)</name>
    <dbReference type="NCBI Taxonomy" id="167542"/>
    <lineage>
        <taxon>Bacteria</taxon>
        <taxon>Bacillati</taxon>
        <taxon>Cyanobacteriota</taxon>
        <taxon>Cyanophyceae</taxon>
        <taxon>Synechococcales</taxon>
        <taxon>Prochlorococcaceae</taxon>
        <taxon>Prochlorococcus</taxon>
    </lineage>
</organism>
<feature type="chain" id="PRO_0000299971" description="Ribulose bisphosphate carboxylase large chain">
    <location>
        <begin position="1"/>
        <end position="471"/>
    </location>
</feature>
<feature type="active site" description="Proton acceptor" evidence="1">
    <location>
        <position position="167"/>
    </location>
</feature>
<feature type="active site" description="Proton acceptor" evidence="1">
    <location>
        <position position="286"/>
    </location>
</feature>
<feature type="binding site" description="in homodimeric partner" evidence="1">
    <location>
        <position position="115"/>
    </location>
    <ligand>
        <name>substrate</name>
    </ligand>
</feature>
<feature type="binding site" evidence="1">
    <location>
        <position position="165"/>
    </location>
    <ligand>
        <name>substrate</name>
    </ligand>
</feature>
<feature type="binding site" evidence="1">
    <location>
        <position position="169"/>
    </location>
    <ligand>
        <name>substrate</name>
    </ligand>
</feature>
<feature type="binding site" description="via carbamate group" evidence="1">
    <location>
        <position position="193"/>
    </location>
    <ligand>
        <name>Mg(2+)</name>
        <dbReference type="ChEBI" id="CHEBI:18420"/>
    </ligand>
</feature>
<feature type="binding site" evidence="1">
    <location>
        <position position="195"/>
    </location>
    <ligand>
        <name>Mg(2+)</name>
        <dbReference type="ChEBI" id="CHEBI:18420"/>
    </ligand>
</feature>
<feature type="binding site" evidence="1">
    <location>
        <position position="196"/>
    </location>
    <ligand>
        <name>Mg(2+)</name>
        <dbReference type="ChEBI" id="CHEBI:18420"/>
    </ligand>
</feature>
<feature type="binding site" evidence="1">
    <location>
        <position position="287"/>
    </location>
    <ligand>
        <name>substrate</name>
    </ligand>
</feature>
<feature type="binding site" evidence="1">
    <location>
        <position position="319"/>
    </location>
    <ligand>
        <name>substrate</name>
    </ligand>
</feature>
<feature type="binding site" evidence="1">
    <location>
        <position position="371"/>
    </location>
    <ligand>
        <name>substrate</name>
    </ligand>
</feature>
<feature type="site" description="Transition state stabilizer" evidence="1">
    <location>
        <position position="326"/>
    </location>
</feature>
<feature type="modified residue" description="N6-carboxylysine" evidence="1">
    <location>
        <position position="193"/>
    </location>
</feature>
<protein>
    <recommendedName>
        <fullName evidence="1">Ribulose bisphosphate carboxylase large chain</fullName>
        <shortName evidence="1">RuBisCO large subunit</shortName>
        <ecNumber evidence="1">4.1.1.39</ecNumber>
    </recommendedName>
</protein>
<keyword id="KW-1283">Bacterial microcompartment</keyword>
<keyword id="KW-0113">Calvin cycle</keyword>
<keyword id="KW-0120">Carbon dioxide fixation</keyword>
<keyword id="KW-1282">Carboxysome</keyword>
<keyword id="KW-0456">Lyase</keyword>
<keyword id="KW-0460">Magnesium</keyword>
<keyword id="KW-0479">Metal-binding</keyword>
<keyword id="KW-0503">Monooxygenase</keyword>
<keyword id="KW-0560">Oxidoreductase</keyword>
<keyword id="KW-0601">Photorespiration</keyword>
<keyword id="KW-0602">Photosynthesis</keyword>
<reference key="1">
    <citation type="journal article" date="2007" name="PLoS Genet.">
        <title>Patterns and implications of gene gain and loss in the evolution of Prochlorococcus.</title>
        <authorList>
            <person name="Kettler G.C."/>
            <person name="Martiny A.C."/>
            <person name="Huang K."/>
            <person name="Zucker J."/>
            <person name="Coleman M.L."/>
            <person name="Rodrigue S."/>
            <person name="Chen F."/>
            <person name="Lapidus A."/>
            <person name="Ferriera S."/>
            <person name="Johnson J."/>
            <person name="Steglich C."/>
            <person name="Church G.M."/>
            <person name="Richardson P."/>
            <person name="Chisholm S.W."/>
        </authorList>
    </citation>
    <scope>NUCLEOTIDE SEQUENCE [LARGE SCALE GENOMIC DNA]</scope>
    <source>
        <strain>MIT 9515</strain>
    </source>
</reference>
<name>RBL_PROM5</name>
<comment type="function">
    <text evidence="1">RuBisCO catalyzes two reactions: the carboxylation of D-ribulose 1,5-bisphosphate, the primary event in carbon dioxide fixation, as well as the oxidative fragmentation of the pentose substrate in the photorespiration process. Both reactions occur simultaneously and in competition at the same active site.</text>
</comment>
<comment type="catalytic activity">
    <reaction evidence="1">
        <text>2 (2R)-3-phosphoglycerate + 2 H(+) = D-ribulose 1,5-bisphosphate + CO2 + H2O</text>
        <dbReference type="Rhea" id="RHEA:23124"/>
        <dbReference type="ChEBI" id="CHEBI:15377"/>
        <dbReference type="ChEBI" id="CHEBI:15378"/>
        <dbReference type="ChEBI" id="CHEBI:16526"/>
        <dbReference type="ChEBI" id="CHEBI:57870"/>
        <dbReference type="ChEBI" id="CHEBI:58272"/>
        <dbReference type="EC" id="4.1.1.39"/>
    </reaction>
</comment>
<comment type="catalytic activity">
    <reaction evidence="1">
        <text>D-ribulose 1,5-bisphosphate + O2 = 2-phosphoglycolate + (2R)-3-phosphoglycerate + 2 H(+)</text>
        <dbReference type="Rhea" id="RHEA:36631"/>
        <dbReference type="ChEBI" id="CHEBI:15378"/>
        <dbReference type="ChEBI" id="CHEBI:15379"/>
        <dbReference type="ChEBI" id="CHEBI:57870"/>
        <dbReference type="ChEBI" id="CHEBI:58033"/>
        <dbReference type="ChEBI" id="CHEBI:58272"/>
    </reaction>
</comment>
<comment type="cofactor">
    <cofactor evidence="1">
        <name>Mg(2+)</name>
        <dbReference type="ChEBI" id="CHEBI:18420"/>
    </cofactor>
    <text evidence="1">Binds 1 Mg(2+) ion per subunit.</text>
</comment>
<comment type="subunit">
    <text evidence="1">Heterohexadecamer of 8 large chains and 8 small chains.</text>
</comment>
<comment type="subcellular location">
    <subcellularLocation>
        <location evidence="1">Carboxysome</location>
    </subcellularLocation>
</comment>
<comment type="miscellaneous">
    <text evidence="1">The basic functional RuBisCO is composed of a large chain homodimer in a 'head-to-tail' conformation. In form I RuBisCO this homodimer is arranged in a barrel-like tetramer with the small subunits forming a tetrameric 'cap' on each end of the 'barrel'.</text>
</comment>
<comment type="similarity">
    <text evidence="1">Belongs to the RuBisCO large chain family. Type I subfamily.</text>
</comment>
<accession>A2BVL2</accession>
<evidence type="ECO:0000255" key="1">
    <source>
        <dbReference type="HAMAP-Rule" id="MF_01338"/>
    </source>
</evidence>
<proteinExistence type="inferred from homology"/>
<sequence>MSKKYDAGVKEYRDTYWTPEYVPLDTDLLACFKCTGQEGVPREEVAAAVAAESSTGTWSTVWSELLTDLEFYKGRCYRIEDVPGDPEAFYAFIAYPLDLFEEGSITNVLTSLVGNVFGFKALRHLRLEDIRFPIAFIKTCGGPPNGIVVERDRLNKYGRPLLGCTIKPKLGLSGKNYGRVVYECLRGGLDLTKDDENINSQPFQRWRERFEFVAEAVKLAQQETGEVKGHYLNCTANTPEELYERAEFAKELDMPIIMHDYITGGFTANTGLANWCRKNGMLLHIHRAMHAVIDRHPKHGIHFRVLAKCLRLSGGDQLHTGTVVGKLEGDRQTTLGYIDNLRESFVPEDRSRGNFFDQDWGSMPGVFAVASGGIHVWHMPALLAIFGDDSCLQFGGGTHGHPWGSAAGAAANRVALEACVKARNAGREIEKESRDILMEAAKHSPELAIALETWKEIKFEFDTVDKLDVQG</sequence>
<gene>
    <name evidence="1" type="primary">cbbL</name>
    <name evidence="1" type="synonym">rbcL</name>
    <name type="ordered locus">P9515_06141</name>
</gene>